<name>MURD_SYNY3</name>
<sequence length="452" mass="49049">MPQACVIGLGRSGIAAARVLHRDGWQVTVFDQADNDQLRHMGQPLVQEGISLKLGDRLDPVKEAWPERIVVSPGVPWDIPLLVAAREKGVEVTGELELAWQYLHAVPWVGITGTNGKTTTTSLVQAIFQKAGLNAPACGNIGYAACELVLQNQNYDWIVAEISSYQIESSPTLAPQIGLWTTFTPDHLSRHKTLENYFNIKASLLSRSAIQVLNGDDPHLHSHGPNLYPQAHWTSTQGANHLAGLCDPKQGVYLQDNWVNAFGELIAPINLFKMPGQHNQQNLLMAIAAARLAGIDKKAITETLLTFTGVPHRLEPICTINGVQFINDSKATNYDAAEVGLSSMKGPTILIAGGEAKEGDDQAWLAQIRQKAVAVLLIGDAAPNFATRLKAVGYENYEIVETMANAVQRGLELASKNNASAVLLSPACASFDQYNSFEERGEDFRACCLGLV</sequence>
<organism>
    <name type="scientific">Synechocystis sp. (strain ATCC 27184 / PCC 6803 / Kazusa)</name>
    <dbReference type="NCBI Taxonomy" id="1111708"/>
    <lineage>
        <taxon>Bacteria</taxon>
        <taxon>Bacillati</taxon>
        <taxon>Cyanobacteriota</taxon>
        <taxon>Cyanophyceae</taxon>
        <taxon>Synechococcales</taxon>
        <taxon>Merismopediaceae</taxon>
        <taxon>Synechocystis</taxon>
    </lineage>
</organism>
<reference key="1">
    <citation type="journal article" date="1996" name="DNA Res.">
        <title>Sequence analysis of the genome of the unicellular cyanobacterium Synechocystis sp. strain PCC6803. II. Sequence determination of the entire genome and assignment of potential protein-coding regions.</title>
        <authorList>
            <person name="Kaneko T."/>
            <person name="Sato S."/>
            <person name="Kotani H."/>
            <person name="Tanaka A."/>
            <person name="Asamizu E."/>
            <person name="Nakamura Y."/>
            <person name="Miyajima N."/>
            <person name="Hirosawa M."/>
            <person name="Sugiura M."/>
            <person name="Sasamoto S."/>
            <person name="Kimura T."/>
            <person name="Hosouchi T."/>
            <person name="Matsuno A."/>
            <person name="Muraki A."/>
            <person name="Nakazaki N."/>
            <person name="Naruo K."/>
            <person name="Okumura S."/>
            <person name="Shimpo S."/>
            <person name="Takeuchi C."/>
            <person name="Wada T."/>
            <person name="Watanabe A."/>
            <person name="Yamada M."/>
            <person name="Yasuda M."/>
            <person name="Tabata S."/>
        </authorList>
    </citation>
    <scope>NUCLEOTIDE SEQUENCE [LARGE SCALE GENOMIC DNA]</scope>
    <source>
        <strain>ATCC 27184 / PCC 6803 / Kazusa</strain>
    </source>
</reference>
<gene>
    <name type="primary">murD</name>
    <name type="ordered locus">sll2010</name>
</gene>
<feature type="chain" id="PRO_0000109111" description="UDP-N-acetylmuramoylalanine--D-glutamate ligase">
    <location>
        <begin position="1"/>
        <end position="452"/>
    </location>
</feature>
<feature type="binding site" evidence="2">
    <location>
        <begin position="113"/>
        <end position="119"/>
    </location>
    <ligand>
        <name>ATP</name>
        <dbReference type="ChEBI" id="CHEBI:30616"/>
    </ligand>
</feature>
<dbReference type="EC" id="6.3.2.9"/>
<dbReference type="EMBL" id="BA000022">
    <property type="protein sequence ID" value="BAA17713.1"/>
    <property type="molecule type" value="Genomic_DNA"/>
</dbReference>
<dbReference type="PIR" id="S77155">
    <property type="entry name" value="S77155"/>
</dbReference>
<dbReference type="SMR" id="P73668"/>
<dbReference type="FunCoup" id="P73668">
    <property type="interactions" value="369"/>
</dbReference>
<dbReference type="IntAct" id="P73668">
    <property type="interactions" value="1"/>
</dbReference>
<dbReference type="STRING" id="1148.gene:10498580"/>
<dbReference type="PaxDb" id="1148-1652794"/>
<dbReference type="EnsemblBacteria" id="BAA17713">
    <property type="protein sequence ID" value="BAA17713"/>
    <property type="gene ID" value="BAA17713"/>
</dbReference>
<dbReference type="KEGG" id="syn:sll2010"/>
<dbReference type="eggNOG" id="COG0771">
    <property type="taxonomic scope" value="Bacteria"/>
</dbReference>
<dbReference type="InParanoid" id="P73668"/>
<dbReference type="PhylomeDB" id="P73668"/>
<dbReference type="UniPathway" id="UPA00219"/>
<dbReference type="Proteomes" id="UP000001425">
    <property type="component" value="Chromosome"/>
</dbReference>
<dbReference type="GO" id="GO:0005737">
    <property type="term" value="C:cytoplasm"/>
    <property type="evidence" value="ECO:0007669"/>
    <property type="project" value="UniProtKB-SubCell"/>
</dbReference>
<dbReference type="GO" id="GO:0005524">
    <property type="term" value="F:ATP binding"/>
    <property type="evidence" value="ECO:0007669"/>
    <property type="project" value="UniProtKB-UniRule"/>
</dbReference>
<dbReference type="GO" id="GO:0008764">
    <property type="term" value="F:UDP-N-acetylmuramoylalanine-D-glutamate ligase activity"/>
    <property type="evidence" value="ECO:0007669"/>
    <property type="project" value="UniProtKB-UniRule"/>
</dbReference>
<dbReference type="GO" id="GO:0051301">
    <property type="term" value="P:cell division"/>
    <property type="evidence" value="ECO:0007669"/>
    <property type="project" value="UniProtKB-KW"/>
</dbReference>
<dbReference type="GO" id="GO:0071555">
    <property type="term" value="P:cell wall organization"/>
    <property type="evidence" value="ECO:0007669"/>
    <property type="project" value="UniProtKB-KW"/>
</dbReference>
<dbReference type="GO" id="GO:0009252">
    <property type="term" value="P:peptidoglycan biosynthetic process"/>
    <property type="evidence" value="ECO:0007669"/>
    <property type="project" value="UniProtKB-UniRule"/>
</dbReference>
<dbReference type="GO" id="GO:0008360">
    <property type="term" value="P:regulation of cell shape"/>
    <property type="evidence" value="ECO:0007669"/>
    <property type="project" value="UniProtKB-KW"/>
</dbReference>
<dbReference type="Gene3D" id="3.90.190.20">
    <property type="entry name" value="Mur ligase, C-terminal domain"/>
    <property type="match status" value="1"/>
</dbReference>
<dbReference type="Gene3D" id="3.40.1190.10">
    <property type="entry name" value="Mur-like, catalytic domain"/>
    <property type="match status" value="1"/>
</dbReference>
<dbReference type="Gene3D" id="3.40.50.720">
    <property type="entry name" value="NAD(P)-binding Rossmann-like Domain"/>
    <property type="match status" value="1"/>
</dbReference>
<dbReference type="HAMAP" id="MF_00639">
    <property type="entry name" value="MurD"/>
    <property type="match status" value="1"/>
</dbReference>
<dbReference type="InterPro" id="IPR036565">
    <property type="entry name" value="Mur-like_cat_sf"/>
</dbReference>
<dbReference type="InterPro" id="IPR004101">
    <property type="entry name" value="Mur_ligase_C"/>
</dbReference>
<dbReference type="InterPro" id="IPR036615">
    <property type="entry name" value="Mur_ligase_C_dom_sf"/>
</dbReference>
<dbReference type="InterPro" id="IPR013221">
    <property type="entry name" value="Mur_ligase_cen"/>
</dbReference>
<dbReference type="InterPro" id="IPR005762">
    <property type="entry name" value="MurD"/>
</dbReference>
<dbReference type="NCBIfam" id="TIGR01087">
    <property type="entry name" value="murD"/>
    <property type="match status" value="1"/>
</dbReference>
<dbReference type="PANTHER" id="PTHR43692">
    <property type="entry name" value="UDP-N-ACETYLMURAMOYLALANINE--D-GLUTAMATE LIGASE"/>
    <property type="match status" value="1"/>
</dbReference>
<dbReference type="PANTHER" id="PTHR43692:SF1">
    <property type="entry name" value="UDP-N-ACETYLMURAMOYLALANINE--D-GLUTAMATE LIGASE"/>
    <property type="match status" value="1"/>
</dbReference>
<dbReference type="Pfam" id="PF02875">
    <property type="entry name" value="Mur_ligase_C"/>
    <property type="match status" value="1"/>
</dbReference>
<dbReference type="Pfam" id="PF08245">
    <property type="entry name" value="Mur_ligase_M"/>
    <property type="match status" value="1"/>
</dbReference>
<dbReference type="Pfam" id="PF21799">
    <property type="entry name" value="MurD-like_N"/>
    <property type="match status" value="1"/>
</dbReference>
<dbReference type="SUPFAM" id="SSF51984">
    <property type="entry name" value="MurCD N-terminal domain"/>
    <property type="match status" value="1"/>
</dbReference>
<dbReference type="SUPFAM" id="SSF53623">
    <property type="entry name" value="MurD-like peptide ligases, catalytic domain"/>
    <property type="match status" value="1"/>
</dbReference>
<dbReference type="SUPFAM" id="SSF53244">
    <property type="entry name" value="MurD-like peptide ligases, peptide-binding domain"/>
    <property type="match status" value="1"/>
</dbReference>
<keyword id="KW-0067">ATP-binding</keyword>
<keyword id="KW-0131">Cell cycle</keyword>
<keyword id="KW-0132">Cell division</keyword>
<keyword id="KW-0133">Cell shape</keyword>
<keyword id="KW-0961">Cell wall biogenesis/degradation</keyword>
<keyword id="KW-0963">Cytoplasm</keyword>
<keyword id="KW-0436">Ligase</keyword>
<keyword id="KW-0547">Nucleotide-binding</keyword>
<keyword id="KW-0573">Peptidoglycan synthesis</keyword>
<keyword id="KW-1185">Reference proteome</keyword>
<proteinExistence type="inferred from homology"/>
<comment type="function">
    <text evidence="1">Cell wall formation. Catalyzes the addition of glutamate to the nucleotide precursor UDP-N-acetylmuramoyl-L-alanine (UMA).</text>
</comment>
<comment type="catalytic activity">
    <reaction>
        <text>UDP-N-acetyl-alpha-D-muramoyl-L-alanine + D-glutamate + ATP = UDP-N-acetyl-alpha-D-muramoyl-L-alanyl-D-glutamate + ADP + phosphate + H(+)</text>
        <dbReference type="Rhea" id="RHEA:16429"/>
        <dbReference type="ChEBI" id="CHEBI:15378"/>
        <dbReference type="ChEBI" id="CHEBI:29986"/>
        <dbReference type="ChEBI" id="CHEBI:30616"/>
        <dbReference type="ChEBI" id="CHEBI:43474"/>
        <dbReference type="ChEBI" id="CHEBI:83898"/>
        <dbReference type="ChEBI" id="CHEBI:83900"/>
        <dbReference type="ChEBI" id="CHEBI:456216"/>
        <dbReference type="EC" id="6.3.2.9"/>
    </reaction>
</comment>
<comment type="pathway">
    <text>Cell wall biogenesis; peptidoglycan biosynthesis.</text>
</comment>
<comment type="subcellular location">
    <subcellularLocation>
        <location evidence="1">Cytoplasm</location>
    </subcellularLocation>
</comment>
<comment type="similarity">
    <text evidence="3">Belongs to the MurCDEF family.</text>
</comment>
<evidence type="ECO:0000250" key="1"/>
<evidence type="ECO:0000255" key="2"/>
<evidence type="ECO:0000305" key="3"/>
<accession>P73668</accession>
<protein>
    <recommendedName>
        <fullName>UDP-N-acetylmuramoylalanine--D-glutamate ligase</fullName>
        <ecNumber>6.3.2.9</ecNumber>
    </recommendedName>
    <alternativeName>
        <fullName>D-glutamic acid-adding enzyme</fullName>
    </alternativeName>
    <alternativeName>
        <fullName>UDP-N-acetylmuramoyl-L-alanyl-D-glutamate synthetase</fullName>
    </alternativeName>
</protein>